<dbReference type="EMBL" id="AB362536">
    <property type="protein sequence ID" value="BAF80889.1"/>
    <property type="molecule type" value="Genomic_DNA"/>
</dbReference>
<dbReference type="EMBL" id="CU329670">
    <property type="protein sequence ID" value="CAB93845.1"/>
    <property type="molecule type" value="Genomic_DNA"/>
</dbReference>
<dbReference type="RefSeq" id="NP_594697.1">
    <property type="nucleotide sequence ID" value="NM_001020125.2"/>
</dbReference>
<dbReference type="BioGRID" id="280053">
    <property type="interactions" value="26"/>
</dbReference>
<dbReference type="FunCoup" id="Q9P3W5">
    <property type="interactions" value="37"/>
</dbReference>
<dbReference type="IntAct" id="Q9P3W5">
    <property type="interactions" value="9"/>
</dbReference>
<dbReference type="MINT" id="Q9P3W5"/>
<dbReference type="STRING" id="284812.Q9P3W5"/>
<dbReference type="iPTMnet" id="Q9P3W5"/>
<dbReference type="PaxDb" id="4896-SPAC458.03.1"/>
<dbReference type="EnsemblFungi" id="SPAC458.03.1">
    <property type="protein sequence ID" value="SPAC458.03.1:pep"/>
    <property type="gene ID" value="SPAC458.03"/>
</dbReference>
<dbReference type="GeneID" id="2543639"/>
<dbReference type="KEGG" id="spo:2543639"/>
<dbReference type="PomBase" id="SPAC458.03">
    <property type="gene designation" value="tel2"/>
</dbReference>
<dbReference type="VEuPathDB" id="FungiDB:SPAC458.03"/>
<dbReference type="eggNOG" id="KOG4346">
    <property type="taxonomic scope" value="Eukaryota"/>
</dbReference>
<dbReference type="HOGENOM" id="CLU_329325_0_0_1"/>
<dbReference type="InParanoid" id="Q9P3W5"/>
<dbReference type="OMA" id="AGIMVKL"/>
<dbReference type="PhylomeDB" id="Q9P3W5"/>
<dbReference type="PRO" id="PR:Q9P3W5"/>
<dbReference type="Proteomes" id="UP000002485">
    <property type="component" value="Chromosome I"/>
</dbReference>
<dbReference type="GO" id="GO:0005737">
    <property type="term" value="C:cytoplasm"/>
    <property type="evidence" value="ECO:0000314"/>
    <property type="project" value="PomBase"/>
</dbReference>
<dbReference type="GO" id="GO:0005829">
    <property type="term" value="C:cytosol"/>
    <property type="evidence" value="ECO:0007005"/>
    <property type="project" value="PomBase"/>
</dbReference>
<dbReference type="GO" id="GO:0110078">
    <property type="term" value="C:TTT Hsp90 cochaperone complex"/>
    <property type="evidence" value="ECO:0000314"/>
    <property type="project" value="PomBase"/>
</dbReference>
<dbReference type="GO" id="GO:0051879">
    <property type="term" value="F:Hsp90 protein binding"/>
    <property type="evidence" value="ECO:0000318"/>
    <property type="project" value="GO_Central"/>
</dbReference>
<dbReference type="GO" id="GO:0042162">
    <property type="term" value="F:telomeric DNA binding"/>
    <property type="evidence" value="ECO:0000318"/>
    <property type="project" value="GO_Central"/>
</dbReference>
<dbReference type="GO" id="GO:0051083">
    <property type="term" value="P:'de novo' cotranslational protein folding"/>
    <property type="evidence" value="ECO:0000269"/>
    <property type="project" value="PomBase"/>
</dbReference>
<dbReference type="Gene3D" id="1.25.40.720">
    <property type="entry name" value="Telomere length regulation protein 2, C-terminal domain"/>
    <property type="match status" value="1"/>
</dbReference>
<dbReference type="InterPro" id="IPR038528">
    <property type="entry name" value="TEL2_C_sf"/>
</dbReference>
<dbReference type="InterPro" id="IPR051970">
    <property type="entry name" value="TEL2_Regulation"/>
</dbReference>
<dbReference type="InterPro" id="IPR019337">
    <property type="entry name" value="Telomere_length_regulation_dom"/>
</dbReference>
<dbReference type="PANTHER" id="PTHR15830">
    <property type="entry name" value="TELOMERE LENGTH REGULATION PROTEIN TEL2 FAMILY MEMBER"/>
    <property type="match status" value="1"/>
</dbReference>
<dbReference type="PANTHER" id="PTHR15830:SF10">
    <property type="entry name" value="TELOMERE LENGTH REGULATION PROTEIN TEL2 HOMOLOG"/>
    <property type="match status" value="1"/>
</dbReference>
<dbReference type="Pfam" id="PF25320">
    <property type="entry name" value="TELO2_ARM"/>
    <property type="match status" value="1"/>
</dbReference>
<dbReference type="Pfam" id="PF10193">
    <property type="entry name" value="Telomere_reg-2"/>
    <property type="match status" value="1"/>
</dbReference>
<feature type="chain" id="PRO_0000353821" description="DNA replication checkpoint protein tel2">
    <location>
        <begin position="1"/>
        <end position="868"/>
    </location>
</feature>
<feature type="region of interest" description="Disordered" evidence="1">
    <location>
        <begin position="484"/>
        <end position="503"/>
    </location>
</feature>
<feature type="compositionally biased region" description="Acidic residues" evidence="1">
    <location>
        <begin position="484"/>
        <end position="497"/>
    </location>
</feature>
<feature type="modified residue" description="Phosphoserine" evidence="5">
    <location>
        <position position="490"/>
    </location>
</feature>
<name>TEL2_SCHPO</name>
<reference key="1">
    <citation type="journal article" date="2007" name="J. Biol. Chem.">
        <title>Tel2 is required for activation of the Mrc1-mediated replication checkpoint.</title>
        <authorList>
            <person name="Shikata M."/>
            <person name="Ishikawa F."/>
            <person name="Kanoh J."/>
        </authorList>
    </citation>
    <scope>NUCLEOTIDE SEQUENCE [GENOMIC DNA]</scope>
    <scope>FUNCTION</scope>
</reference>
<reference key="2">
    <citation type="journal article" date="2002" name="Nature">
        <title>The genome sequence of Schizosaccharomyces pombe.</title>
        <authorList>
            <person name="Wood V."/>
            <person name="Gwilliam R."/>
            <person name="Rajandream M.A."/>
            <person name="Lyne M.H."/>
            <person name="Lyne R."/>
            <person name="Stewart A."/>
            <person name="Sgouros J.G."/>
            <person name="Peat N."/>
            <person name="Hayles J."/>
            <person name="Baker S.G."/>
            <person name="Basham D."/>
            <person name="Bowman S."/>
            <person name="Brooks K."/>
            <person name="Brown D."/>
            <person name="Brown S."/>
            <person name="Chillingworth T."/>
            <person name="Churcher C.M."/>
            <person name="Collins M."/>
            <person name="Connor R."/>
            <person name="Cronin A."/>
            <person name="Davis P."/>
            <person name="Feltwell T."/>
            <person name="Fraser A."/>
            <person name="Gentles S."/>
            <person name="Goble A."/>
            <person name="Hamlin N."/>
            <person name="Harris D.E."/>
            <person name="Hidalgo J."/>
            <person name="Hodgson G."/>
            <person name="Holroyd S."/>
            <person name="Hornsby T."/>
            <person name="Howarth S."/>
            <person name="Huckle E.J."/>
            <person name="Hunt S."/>
            <person name="Jagels K."/>
            <person name="James K.D."/>
            <person name="Jones L."/>
            <person name="Jones M."/>
            <person name="Leather S."/>
            <person name="McDonald S."/>
            <person name="McLean J."/>
            <person name="Mooney P."/>
            <person name="Moule S."/>
            <person name="Mungall K.L."/>
            <person name="Murphy L.D."/>
            <person name="Niblett D."/>
            <person name="Odell C."/>
            <person name="Oliver K."/>
            <person name="O'Neil S."/>
            <person name="Pearson D."/>
            <person name="Quail M.A."/>
            <person name="Rabbinowitsch E."/>
            <person name="Rutherford K.M."/>
            <person name="Rutter S."/>
            <person name="Saunders D."/>
            <person name="Seeger K."/>
            <person name="Sharp S."/>
            <person name="Skelton J."/>
            <person name="Simmonds M.N."/>
            <person name="Squares R."/>
            <person name="Squares S."/>
            <person name="Stevens K."/>
            <person name="Taylor K."/>
            <person name="Taylor R.G."/>
            <person name="Tivey A."/>
            <person name="Walsh S.V."/>
            <person name="Warren T."/>
            <person name="Whitehead S."/>
            <person name="Woodward J.R."/>
            <person name="Volckaert G."/>
            <person name="Aert R."/>
            <person name="Robben J."/>
            <person name="Grymonprez B."/>
            <person name="Weltjens I."/>
            <person name="Vanstreels E."/>
            <person name="Rieger M."/>
            <person name="Schaefer M."/>
            <person name="Mueller-Auer S."/>
            <person name="Gabel C."/>
            <person name="Fuchs M."/>
            <person name="Duesterhoeft A."/>
            <person name="Fritzc C."/>
            <person name="Holzer E."/>
            <person name="Moestl D."/>
            <person name="Hilbert H."/>
            <person name="Borzym K."/>
            <person name="Langer I."/>
            <person name="Beck A."/>
            <person name="Lehrach H."/>
            <person name="Reinhardt R."/>
            <person name="Pohl T.M."/>
            <person name="Eger P."/>
            <person name="Zimmermann W."/>
            <person name="Wedler H."/>
            <person name="Wambutt R."/>
            <person name="Purnelle B."/>
            <person name="Goffeau A."/>
            <person name="Cadieu E."/>
            <person name="Dreano S."/>
            <person name="Gloux S."/>
            <person name="Lelaure V."/>
            <person name="Mottier S."/>
            <person name="Galibert F."/>
            <person name="Aves S.J."/>
            <person name="Xiang Z."/>
            <person name="Hunt C."/>
            <person name="Moore K."/>
            <person name="Hurst S.M."/>
            <person name="Lucas M."/>
            <person name="Rochet M."/>
            <person name="Gaillardin C."/>
            <person name="Tallada V.A."/>
            <person name="Garzon A."/>
            <person name="Thode G."/>
            <person name="Daga R.R."/>
            <person name="Cruzado L."/>
            <person name="Jimenez J."/>
            <person name="Sanchez M."/>
            <person name="del Rey F."/>
            <person name="Benito J."/>
            <person name="Dominguez A."/>
            <person name="Revuelta J.L."/>
            <person name="Moreno S."/>
            <person name="Armstrong J."/>
            <person name="Forsburg S.L."/>
            <person name="Cerutti L."/>
            <person name="Lowe T."/>
            <person name="McCombie W.R."/>
            <person name="Paulsen I."/>
            <person name="Potashkin J."/>
            <person name="Shpakovski G.V."/>
            <person name="Ussery D."/>
            <person name="Barrell B.G."/>
            <person name="Nurse P."/>
        </authorList>
    </citation>
    <scope>NUCLEOTIDE SEQUENCE [LARGE SCALE GENOMIC DNA]</scope>
    <source>
        <strain>972 / ATCC 24843</strain>
    </source>
</reference>
<reference key="3">
    <citation type="journal article" date="2006" name="Nat. Biotechnol.">
        <title>ORFeome cloning and global analysis of protein localization in the fission yeast Schizosaccharomyces pombe.</title>
        <authorList>
            <person name="Matsuyama A."/>
            <person name="Arai R."/>
            <person name="Yashiroda Y."/>
            <person name="Shirai A."/>
            <person name="Kamata A."/>
            <person name="Sekido S."/>
            <person name="Kobayashi Y."/>
            <person name="Hashimoto A."/>
            <person name="Hamamoto M."/>
            <person name="Hiraoka Y."/>
            <person name="Horinouchi S."/>
            <person name="Yoshida M."/>
        </authorList>
    </citation>
    <scope>SUBCELLULAR LOCATION [LARGE SCALE ANALYSIS]</scope>
</reference>
<reference key="4">
    <citation type="journal article" date="2007" name="Genes Cells">
        <title>Rapamycin sensitivity of the Schizosaccharomyces pombe tor2 mutant and organization of two highly phosphorylated TOR complexes by specific and common subunits.</title>
        <authorList>
            <person name="Hayashi T."/>
            <person name="Hatanaka M."/>
            <person name="Nagao K."/>
            <person name="Nakaseko Y."/>
            <person name="Kanoh J."/>
            <person name="Kokubu A."/>
            <person name="Ebe M."/>
            <person name="Yanagida M."/>
        </authorList>
    </citation>
    <scope>IDENTIFICATION IN THE TORC1 AND TORC2 COMPLEXES</scope>
    <scope>INTERACTION WITH TTI1</scope>
    <scope>IDENTIFICATION BY MASS SPECTROMETRY</scope>
</reference>
<reference key="5">
    <citation type="journal article" date="2008" name="J. Proteome Res.">
        <title>Phosphoproteome analysis of fission yeast.</title>
        <authorList>
            <person name="Wilson-Grady J.T."/>
            <person name="Villen J."/>
            <person name="Gygi S.P."/>
        </authorList>
    </citation>
    <scope>PHOSPHORYLATION [LARGE SCALE ANALYSIS] AT SER-490</scope>
    <scope>IDENTIFICATION BY MASS SPECTROMETRY</scope>
</reference>
<proteinExistence type="evidence at protein level"/>
<comment type="function">
    <text evidence="3">Component of the TORC1 and TORC2 complexes required for the regulation of the cellular respons to changes in available nutrients. Required for normal entry into S phase. Regulates activation of the DNA replication checkpoint. Required for efficient phosphorylation of mrc1, which is essential for the activation of cds1 kinase. Also plays an important role in genome stability.</text>
</comment>
<comment type="subunit">
    <text evidence="4">Component of the TORC1 complex composed of at least mip1, orb5, tel2, toc1, toc89, tor2, tti1 and wat1. Component of the TORC2 complex composed of at least bit61, orb5, sin1, ste20, tel2, tor1, tti1 and wat1. Interacts with tti1.</text>
</comment>
<comment type="interaction">
    <interactant intactId="EBI-2014377">
        <id>Q9P3W5</id>
    </interactant>
    <interactant intactId="EBI-2014420">
        <id>O14356</id>
        <label>tor1</label>
    </interactant>
    <organismsDiffer>false</organismsDiffer>
    <experiments>3</experiments>
</comment>
<comment type="interaction">
    <interactant intactId="EBI-2014377">
        <id>Q9P3W5</id>
    </interactant>
    <interactant intactId="EBI-2014299">
        <id>Q9Y7K2</id>
        <label>tor2</label>
    </interactant>
    <organismsDiffer>false</organismsDiffer>
    <experiments>3</experiments>
</comment>
<comment type="subcellular location">
    <subcellularLocation>
        <location evidence="2">Cytoplasm</location>
    </subcellularLocation>
</comment>
<comment type="similarity">
    <text evidence="6">Belongs to the TEL2 family.</text>
</comment>
<organism>
    <name type="scientific">Schizosaccharomyces pombe (strain 972 / ATCC 24843)</name>
    <name type="common">Fission yeast</name>
    <dbReference type="NCBI Taxonomy" id="284812"/>
    <lineage>
        <taxon>Eukaryota</taxon>
        <taxon>Fungi</taxon>
        <taxon>Dikarya</taxon>
        <taxon>Ascomycota</taxon>
        <taxon>Taphrinomycotina</taxon>
        <taxon>Schizosaccharomycetes</taxon>
        <taxon>Schizosaccharomycetales</taxon>
        <taxon>Schizosaccharomycetaceae</taxon>
        <taxon>Schizosaccharomyces</taxon>
    </lineage>
</organism>
<keyword id="KW-0131">Cell cycle</keyword>
<keyword id="KW-0963">Cytoplasm</keyword>
<keyword id="KW-0597">Phosphoprotein</keyword>
<keyword id="KW-1185">Reference proteome</keyword>
<accession>Q9P3W5</accession>
<evidence type="ECO:0000256" key="1">
    <source>
        <dbReference type="SAM" id="MobiDB-lite"/>
    </source>
</evidence>
<evidence type="ECO:0000269" key="2">
    <source>
    </source>
</evidence>
<evidence type="ECO:0000269" key="3">
    <source>
    </source>
</evidence>
<evidence type="ECO:0000269" key="4">
    <source>
    </source>
</evidence>
<evidence type="ECO:0000269" key="5">
    <source>
    </source>
</evidence>
<evidence type="ECO:0000305" key="6"/>
<protein>
    <recommendedName>
        <fullName>DNA replication checkpoint protein tel2</fullName>
    </recommendedName>
</protein>
<gene>
    <name type="primary">tel2</name>
    <name type="ORF">SPAC458.03</name>
</gene>
<sequence length="868" mass="99050">MKSFASELSKPIQKPRLKEILKELQHIGVPSPCNLRLYHELISVIVPTFWNGKINSEIDFLLAKCFSTLLGLKLLCVRLDNFVQEANLQNIHLVTVYLELLEKAFECIDLDDNCKLIWESTVLSDHQKQSLWTEFIFFLGNFKITNSMSAAMLTFKVYDDSKRLKASSMADYIGVLSSKLACIISKPAVKTPEIYSKLFHYLLHSSNLKAFINPLIPLTQKFCVQLQKLFADLTVSDQMLFLNQLLLEHNTKYPTNFSYSTARDDRITGSLATLLRLNFSSTHFLRLIEFYWGVPTNLIIKRVEVVCSSISYKESDKKELEKTVDSLFNIWSNAQFLRSYTLLAQESLTIYLLLFIPKLEAKYLNNLSKSLMFSNAISCRLDSLDDDIRMHGMIMAEVISTYSGVSLSNPLAFDVPIMKTTKAKVLKSLSSLKDEFLPIEILNDESVIAETSIEKEETNVTHLEKPVISKNDDLIRGDDLEPYDFPDIDSEDTDDDPTVSRSKTHSPVYVQDLCKMLKDTESFEKQRVALENASKLIKRKSAFGTELRDHADELLQTLISLQNRFDLMNFDEMQMTAIVELLLTCLDICGPVICTNLFVSDYSMRQKILILSCISLAASKFNDDDNERLFPSQLLPGNLHDQFYSPTIEKISDELERKLVFPVMSECKDYAEGPKFLQTRYISKQSEIESKKPLPKANRLSLKVDKSLFLLLTSGYMLASRKTAFIEPLFLVYYLKTLGILFFETFTSKIEGANRMLREYVDVLNEVCRLRSDTPEVNEGLLFSFLAILEISSGRTLANEFGKHLLFFEAYTKFLFESPDQGEKVKSLSAAVLILFENKLSEFRTLALEKLLDDSAPLVPERFGLAGL</sequence>